<sequence length="92" mass="10503">MPRSVWKGPFVDGYLLKKAEKSHEGGRKQAIKTWSRRSTIMPQFVGLTFQVHNGNKFVPVLVTEDMVGHKLGEFSPSRTYYGHAADKKAKRR</sequence>
<comment type="function">
    <text evidence="1">Protein S19 forms a complex with S13 that binds strongly to the 16S ribosomal RNA.</text>
</comment>
<comment type="similarity">
    <text evidence="1">Belongs to the universal ribosomal protein uS19 family.</text>
</comment>
<accession>Q0ANQ4</accession>
<keyword id="KW-1185">Reference proteome</keyword>
<keyword id="KW-0687">Ribonucleoprotein</keyword>
<keyword id="KW-0689">Ribosomal protein</keyword>
<keyword id="KW-0694">RNA-binding</keyword>
<keyword id="KW-0699">rRNA-binding</keyword>
<protein>
    <recommendedName>
        <fullName evidence="1">Small ribosomal subunit protein uS19</fullName>
    </recommendedName>
    <alternativeName>
        <fullName evidence="3">30S ribosomal protein S19</fullName>
    </alternativeName>
</protein>
<evidence type="ECO:0000255" key="1">
    <source>
        <dbReference type="HAMAP-Rule" id="MF_00531"/>
    </source>
</evidence>
<evidence type="ECO:0000256" key="2">
    <source>
        <dbReference type="SAM" id="MobiDB-lite"/>
    </source>
</evidence>
<evidence type="ECO:0000305" key="3"/>
<organism>
    <name type="scientific">Maricaulis maris (strain MCS10)</name>
    <name type="common">Caulobacter maris</name>
    <dbReference type="NCBI Taxonomy" id="394221"/>
    <lineage>
        <taxon>Bacteria</taxon>
        <taxon>Pseudomonadati</taxon>
        <taxon>Pseudomonadota</taxon>
        <taxon>Alphaproteobacteria</taxon>
        <taxon>Maricaulales</taxon>
        <taxon>Maricaulaceae</taxon>
        <taxon>Maricaulis</taxon>
    </lineage>
</organism>
<proteinExistence type="inferred from homology"/>
<gene>
    <name evidence="1" type="primary">rpsS</name>
    <name type="ordered locus">Mmar10_1791</name>
</gene>
<feature type="chain" id="PRO_0000265379" description="Small ribosomal subunit protein uS19">
    <location>
        <begin position="1"/>
        <end position="92"/>
    </location>
</feature>
<feature type="region of interest" description="Disordered" evidence="2">
    <location>
        <begin position="73"/>
        <end position="92"/>
    </location>
</feature>
<dbReference type="EMBL" id="CP000449">
    <property type="protein sequence ID" value="ABI66083.1"/>
    <property type="molecule type" value="Genomic_DNA"/>
</dbReference>
<dbReference type="RefSeq" id="WP_011643729.1">
    <property type="nucleotide sequence ID" value="NC_008347.1"/>
</dbReference>
<dbReference type="SMR" id="Q0ANQ4"/>
<dbReference type="STRING" id="394221.Mmar10_1791"/>
<dbReference type="KEGG" id="mmr:Mmar10_1791"/>
<dbReference type="eggNOG" id="COG0185">
    <property type="taxonomic scope" value="Bacteria"/>
</dbReference>
<dbReference type="HOGENOM" id="CLU_144911_0_1_5"/>
<dbReference type="OrthoDB" id="9797833at2"/>
<dbReference type="Proteomes" id="UP000001964">
    <property type="component" value="Chromosome"/>
</dbReference>
<dbReference type="GO" id="GO:0005737">
    <property type="term" value="C:cytoplasm"/>
    <property type="evidence" value="ECO:0007669"/>
    <property type="project" value="UniProtKB-ARBA"/>
</dbReference>
<dbReference type="GO" id="GO:0015935">
    <property type="term" value="C:small ribosomal subunit"/>
    <property type="evidence" value="ECO:0007669"/>
    <property type="project" value="InterPro"/>
</dbReference>
<dbReference type="GO" id="GO:0019843">
    <property type="term" value="F:rRNA binding"/>
    <property type="evidence" value="ECO:0007669"/>
    <property type="project" value="UniProtKB-UniRule"/>
</dbReference>
<dbReference type="GO" id="GO:0003735">
    <property type="term" value="F:structural constituent of ribosome"/>
    <property type="evidence" value="ECO:0007669"/>
    <property type="project" value="InterPro"/>
</dbReference>
<dbReference type="GO" id="GO:0000028">
    <property type="term" value="P:ribosomal small subunit assembly"/>
    <property type="evidence" value="ECO:0007669"/>
    <property type="project" value="TreeGrafter"/>
</dbReference>
<dbReference type="GO" id="GO:0006412">
    <property type="term" value="P:translation"/>
    <property type="evidence" value="ECO:0007669"/>
    <property type="project" value="UniProtKB-UniRule"/>
</dbReference>
<dbReference type="FunFam" id="3.30.860.10:FF:000001">
    <property type="entry name" value="30S ribosomal protein S19"/>
    <property type="match status" value="1"/>
</dbReference>
<dbReference type="Gene3D" id="3.30.860.10">
    <property type="entry name" value="30s Ribosomal Protein S19, Chain A"/>
    <property type="match status" value="1"/>
</dbReference>
<dbReference type="HAMAP" id="MF_00531">
    <property type="entry name" value="Ribosomal_uS19"/>
    <property type="match status" value="1"/>
</dbReference>
<dbReference type="InterPro" id="IPR002222">
    <property type="entry name" value="Ribosomal_uS19"/>
</dbReference>
<dbReference type="InterPro" id="IPR005732">
    <property type="entry name" value="Ribosomal_uS19_bac-type"/>
</dbReference>
<dbReference type="InterPro" id="IPR020934">
    <property type="entry name" value="Ribosomal_uS19_CS"/>
</dbReference>
<dbReference type="InterPro" id="IPR023575">
    <property type="entry name" value="Ribosomal_uS19_SF"/>
</dbReference>
<dbReference type="NCBIfam" id="TIGR01050">
    <property type="entry name" value="rpsS_bact"/>
    <property type="match status" value="1"/>
</dbReference>
<dbReference type="PANTHER" id="PTHR11880">
    <property type="entry name" value="RIBOSOMAL PROTEIN S19P FAMILY MEMBER"/>
    <property type="match status" value="1"/>
</dbReference>
<dbReference type="PANTHER" id="PTHR11880:SF8">
    <property type="entry name" value="SMALL RIBOSOMAL SUBUNIT PROTEIN US19M"/>
    <property type="match status" value="1"/>
</dbReference>
<dbReference type="Pfam" id="PF00203">
    <property type="entry name" value="Ribosomal_S19"/>
    <property type="match status" value="1"/>
</dbReference>
<dbReference type="PIRSF" id="PIRSF002144">
    <property type="entry name" value="Ribosomal_S19"/>
    <property type="match status" value="1"/>
</dbReference>
<dbReference type="PRINTS" id="PR00975">
    <property type="entry name" value="RIBOSOMALS19"/>
</dbReference>
<dbReference type="SUPFAM" id="SSF54570">
    <property type="entry name" value="Ribosomal protein S19"/>
    <property type="match status" value="1"/>
</dbReference>
<dbReference type="PROSITE" id="PS00323">
    <property type="entry name" value="RIBOSOMAL_S19"/>
    <property type="match status" value="1"/>
</dbReference>
<reference key="1">
    <citation type="submission" date="2006-08" db="EMBL/GenBank/DDBJ databases">
        <title>Complete sequence of Maricaulis maris MCS10.</title>
        <authorList>
            <consortium name="US DOE Joint Genome Institute"/>
            <person name="Copeland A."/>
            <person name="Lucas S."/>
            <person name="Lapidus A."/>
            <person name="Barry K."/>
            <person name="Detter J.C."/>
            <person name="Glavina del Rio T."/>
            <person name="Hammon N."/>
            <person name="Israni S."/>
            <person name="Dalin E."/>
            <person name="Tice H."/>
            <person name="Pitluck S."/>
            <person name="Saunders E."/>
            <person name="Brettin T."/>
            <person name="Bruce D."/>
            <person name="Han C."/>
            <person name="Tapia R."/>
            <person name="Gilna P."/>
            <person name="Schmutz J."/>
            <person name="Larimer F."/>
            <person name="Land M."/>
            <person name="Hauser L."/>
            <person name="Kyrpides N."/>
            <person name="Mikhailova N."/>
            <person name="Viollier P."/>
            <person name="Stephens C."/>
            <person name="Richardson P."/>
        </authorList>
    </citation>
    <scope>NUCLEOTIDE SEQUENCE [LARGE SCALE GENOMIC DNA]</scope>
    <source>
        <strain>MCS10</strain>
    </source>
</reference>
<name>RS19_MARMM</name>